<sequence length="487" mass="56174">MNKEIFNSKLFEKLDKDNLIENSREWSNEIDSTWNYNDVVGILKSWESLNTISLEYIDSIVNCLTETGKDILINGSPEAKLYNILTEQGMSPADANKQFGATAFGSAKNKGWIEVKAGKIFKKVESINDIVKSDLSIPDLSKLDSKTLEQYKKSRFIEEKKLSYYRVTKGEQYNKRSKELSDLTIEMLKDDSWEKESFKVNINAMGVVPEQGYRHPLNKVKNEFKQIFLDMGFEEMPTFNFVENGFWNFDALFQPQQHPARELQDTFFIKDPKTSHDFSDEYCERVKQVHSVGGYGSLGWIYDWKLEEAEKNILRTHTTAVSARMLYKLAQNGFKPKKYFSIDRVFRNETLDATHLAEFHQVEGVIADVDISLGHLIGVISEFFKRLGIDNVRFKPAFNPYTEPSMEIFGYHPILKRWVELGNSGIFRPELLLPMGIPENVRVAAWGLSLERPTMIKYGLDNIRAIFGNSINVNFIKNNPICMFESK</sequence>
<protein>
    <recommendedName>
        <fullName>Phenylalanine--tRNA ligase alpha subunit</fullName>
        <ecNumber>6.1.1.20</ecNumber>
    </recommendedName>
    <alternativeName>
        <fullName>Phenylalanyl-tRNA synthetase alpha subunit</fullName>
        <shortName>PheRS</shortName>
    </alternativeName>
</protein>
<organism>
    <name type="scientific">Dictyostelium discoideum</name>
    <name type="common">Social amoeba</name>
    <dbReference type="NCBI Taxonomy" id="44689"/>
    <lineage>
        <taxon>Eukaryota</taxon>
        <taxon>Amoebozoa</taxon>
        <taxon>Evosea</taxon>
        <taxon>Eumycetozoa</taxon>
        <taxon>Dictyostelia</taxon>
        <taxon>Dictyosteliales</taxon>
        <taxon>Dictyosteliaceae</taxon>
        <taxon>Dictyostelium</taxon>
    </lineage>
</organism>
<keyword id="KW-0030">Aminoacyl-tRNA synthetase</keyword>
<keyword id="KW-0067">ATP-binding</keyword>
<keyword id="KW-0963">Cytoplasm</keyword>
<keyword id="KW-0436">Ligase</keyword>
<keyword id="KW-0460">Magnesium</keyword>
<keyword id="KW-0479">Metal-binding</keyword>
<keyword id="KW-0547">Nucleotide-binding</keyword>
<keyword id="KW-0648">Protein biosynthesis</keyword>
<keyword id="KW-1185">Reference proteome</keyword>
<name>SYFA_DICDI</name>
<evidence type="ECO:0000250" key="1"/>
<evidence type="ECO:0000250" key="2">
    <source>
        <dbReference type="UniProtKB" id="A5K9S0"/>
    </source>
</evidence>
<evidence type="ECO:0000250" key="3">
    <source>
        <dbReference type="UniProtKB" id="Q9Y285"/>
    </source>
</evidence>
<evidence type="ECO:0000305" key="4"/>
<comment type="catalytic activity">
    <reaction>
        <text>tRNA(Phe) + L-phenylalanine + ATP = L-phenylalanyl-tRNA(Phe) + AMP + diphosphate + H(+)</text>
        <dbReference type="Rhea" id="RHEA:19413"/>
        <dbReference type="Rhea" id="RHEA-COMP:9668"/>
        <dbReference type="Rhea" id="RHEA-COMP:9699"/>
        <dbReference type="ChEBI" id="CHEBI:15378"/>
        <dbReference type="ChEBI" id="CHEBI:30616"/>
        <dbReference type="ChEBI" id="CHEBI:33019"/>
        <dbReference type="ChEBI" id="CHEBI:58095"/>
        <dbReference type="ChEBI" id="CHEBI:78442"/>
        <dbReference type="ChEBI" id="CHEBI:78531"/>
        <dbReference type="ChEBI" id="CHEBI:456215"/>
        <dbReference type="EC" id="6.1.1.20"/>
    </reaction>
</comment>
<comment type="cofactor">
    <cofactor evidence="2">
        <name>Mg(2+)</name>
        <dbReference type="ChEBI" id="CHEBI:18420"/>
    </cofactor>
</comment>
<comment type="subunit">
    <text evidence="1">Tetramer of two alpha and two beta subunits.</text>
</comment>
<comment type="subcellular location">
    <subcellularLocation>
        <location evidence="1">Cytoplasm</location>
    </subcellularLocation>
</comment>
<comment type="similarity">
    <text evidence="4">Belongs to the class-II aminoacyl-tRNA synthetase family. Phe-tRNA synthetase alpha subunit type 2 subfamily.</text>
</comment>
<gene>
    <name type="primary">phesA</name>
    <name type="synonym">pheS</name>
    <name type="ORF">DDB_G0287141</name>
</gene>
<feature type="chain" id="PRO_0000327538" description="Phenylalanine--tRNA ligase alpha subunit">
    <location>
        <begin position="1"/>
        <end position="487"/>
    </location>
</feature>
<feature type="binding site" evidence="3">
    <location>
        <position position="319"/>
    </location>
    <ligand>
        <name>L-phenylalanine</name>
        <dbReference type="ChEBI" id="CHEBI:58095"/>
    </ligand>
</feature>
<feature type="binding site" evidence="3">
    <location>
        <begin position="361"/>
        <end position="363"/>
    </location>
    <ligand>
        <name>L-phenylalanine</name>
        <dbReference type="ChEBI" id="CHEBI:58095"/>
    </ligand>
</feature>
<feature type="binding site" evidence="3">
    <location>
        <position position="401"/>
    </location>
    <ligand>
        <name>L-phenylalanine</name>
        <dbReference type="ChEBI" id="CHEBI:58095"/>
    </ligand>
</feature>
<feature type="binding site" evidence="2">
    <location>
        <position position="403"/>
    </location>
    <ligand>
        <name>Mg(2+)</name>
        <dbReference type="ChEBI" id="CHEBI:18420"/>
        <note>shared with beta subunit</note>
    </ligand>
</feature>
<feature type="binding site" evidence="3">
    <location>
        <position position="427"/>
    </location>
    <ligand>
        <name>L-phenylalanine</name>
        <dbReference type="ChEBI" id="CHEBI:58095"/>
    </ligand>
</feature>
<accession>Q54KS8</accession>
<reference key="1">
    <citation type="journal article" date="2005" name="Nature">
        <title>The genome of the social amoeba Dictyostelium discoideum.</title>
        <authorList>
            <person name="Eichinger L."/>
            <person name="Pachebat J.A."/>
            <person name="Gloeckner G."/>
            <person name="Rajandream M.A."/>
            <person name="Sucgang R."/>
            <person name="Berriman M."/>
            <person name="Song J."/>
            <person name="Olsen R."/>
            <person name="Szafranski K."/>
            <person name="Xu Q."/>
            <person name="Tunggal B."/>
            <person name="Kummerfeld S."/>
            <person name="Madera M."/>
            <person name="Konfortov B.A."/>
            <person name="Rivero F."/>
            <person name="Bankier A.T."/>
            <person name="Lehmann R."/>
            <person name="Hamlin N."/>
            <person name="Davies R."/>
            <person name="Gaudet P."/>
            <person name="Fey P."/>
            <person name="Pilcher K."/>
            <person name="Chen G."/>
            <person name="Saunders D."/>
            <person name="Sodergren E.J."/>
            <person name="Davis P."/>
            <person name="Kerhornou A."/>
            <person name="Nie X."/>
            <person name="Hall N."/>
            <person name="Anjard C."/>
            <person name="Hemphill L."/>
            <person name="Bason N."/>
            <person name="Farbrother P."/>
            <person name="Desany B."/>
            <person name="Just E."/>
            <person name="Morio T."/>
            <person name="Rost R."/>
            <person name="Churcher C.M."/>
            <person name="Cooper J."/>
            <person name="Haydock S."/>
            <person name="van Driessche N."/>
            <person name="Cronin A."/>
            <person name="Goodhead I."/>
            <person name="Muzny D.M."/>
            <person name="Mourier T."/>
            <person name="Pain A."/>
            <person name="Lu M."/>
            <person name="Harper D."/>
            <person name="Lindsay R."/>
            <person name="Hauser H."/>
            <person name="James K.D."/>
            <person name="Quiles M."/>
            <person name="Madan Babu M."/>
            <person name="Saito T."/>
            <person name="Buchrieser C."/>
            <person name="Wardroper A."/>
            <person name="Felder M."/>
            <person name="Thangavelu M."/>
            <person name="Johnson D."/>
            <person name="Knights A."/>
            <person name="Loulseged H."/>
            <person name="Mungall K.L."/>
            <person name="Oliver K."/>
            <person name="Price C."/>
            <person name="Quail M.A."/>
            <person name="Urushihara H."/>
            <person name="Hernandez J."/>
            <person name="Rabbinowitsch E."/>
            <person name="Steffen D."/>
            <person name="Sanders M."/>
            <person name="Ma J."/>
            <person name="Kohara Y."/>
            <person name="Sharp S."/>
            <person name="Simmonds M.N."/>
            <person name="Spiegler S."/>
            <person name="Tivey A."/>
            <person name="Sugano S."/>
            <person name="White B."/>
            <person name="Walker D."/>
            <person name="Woodward J.R."/>
            <person name="Winckler T."/>
            <person name="Tanaka Y."/>
            <person name="Shaulsky G."/>
            <person name="Schleicher M."/>
            <person name="Weinstock G.M."/>
            <person name="Rosenthal A."/>
            <person name="Cox E.C."/>
            <person name="Chisholm R.L."/>
            <person name="Gibbs R.A."/>
            <person name="Loomis W.F."/>
            <person name="Platzer M."/>
            <person name="Kay R.R."/>
            <person name="Williams J.G."/>
            <person name="Dear P.H."/>
            <person name="Noegel A.A."/>
            <person name="Barrell B.G."/>
            <person name="Kuspa A."/>
        </authorList>
    </citation>
    <scope>NUCLEOTIDE SEQUENCE [LARGE SCALE GENOMIC DNA]</scope>
    <source>
        <strain>AX4</strain>
    </source>
</reference>
<proteinExistence type="inferred from homology"/>
<dbReference type="EC" id="6.1.1.20"/>
<dbReference type="EMBL" id="AAFI02000098">
    <property type="protein sequence ID" value="EAL63845.1"/>
    <property type="molecule type" value="Genomic_DNA"/>
</dbReference>
<dbReference type="RefSeq" id="XP_637352.1">
    <property type="nucleotide sequence ID" value="XM_632260.1"/>
</dbReference>
<dbReference type="SMR" id="Q54KS8"/>
<dbReference type="FunCoup" id="Q54KS8">
    <property type="interactions" value="1004"/>
</dbReference>
<dbReference type="STRING" id="44689.Q54KS8"/>
<dbReference type="GlyGen" id="Q54KS8">
    <property type="glycosylation" value="1 site"/>
</dbReference>
<dbReference type="PaxDb" id="44689-DDB0231328"/>
<dbReference type="EnsemblProtists" id="EAL63845">
    <property type="protein sequence ID" value="EAL63845"/>
    <property type="gene ID" value="DDB_G0287141"/>
</dbReference>
<dbReference type="GeneID" id="8625974"/>
<dbReference type="KEGG" id="ddi:DDB_G0287141"/>
<dbReference type="dictyBase" id="DDB_G0287141">
    <property type="gene designation" value="phesA"/>
</dbReference>
<dbReference type="VEuPathDB" id="AmoebaDB:DDB_G0287141"/>
<dbReference type="eggNOG" id="KOG2784">
    <property type="taxonomic scope" value="Eukaryota"/>
</dbReference>
<dbReference type="HOGENOM" id="CLU_025086_2_2_1"/>
<dbReference type="InParanoid" id="Q54KS8"/>
<dbReference type="OMA" id="YVEASFW"/>
<dbReference type="PhylomeDB" id="Q54KS8"/>
<dbReference type="PRO" id="PR:Q54KS8"/>
<dbReference type="Proteomes" id="UP000002195">
    <property type="component" value="Chromosome 4"/>
</dbReference>
<dbReference type="GO" id="GO:0005737">
    <property type="term" value="C:cytoplasm"/>
    <property type="evidence" value="ECO:0000250"/>
    <property type="project" value="dictyBase"/>
</dbReference>
<dbReference type="GO" id="GO:0009328">
    <property type="term" value="C:phenylalanine-tRNA ligase complex"/>
    <property type="evidence" value="ECO:0000250"/>
    <property type="project" value="dictyBase"/>
</dbReference>
<dbReference type="GO" id="GO:0005524">
    <property type="term" value="F:ATP binding"/>
    <property type="evidence" value="ECO:0007669"/>
    <property type="project" value="UniProtKB-KW"/>
</dbReference>
<dbReference type="GO" id="GO:0000287">
    <property type="term" value="F:magnesium ion binding"/>
    <property type="evidence" value="ECO:0000250"/>
    <property type="project" value="UniProtKB"/>
</dbReference>
<dbReference type="GO" id="GO:0004826">
    <property type="term" value="F:phenylalanine-tRNA ligase activity"/>
    <property type="evidence" value="ECO:0000250"/>
    <property type="project" value="dictyBase"/>
</dbReference>
<dbReference type="GO" id="GO:0000049">
    <property type="term" value="F:tRNA binding"/>
    <property type="evidence" value="ECO:0007669"/>
    <property type="project" value="InterPro"/>
</dbReference>
<dbReference type="GO" id="GO:0006432">
    <property type="term" value="P:phenylalanyl-tRNA aminoacylation"/>
    <property type="evidence" value="ECO:0000250"/>
    <property type="project" value="dictyBase"/>
</dbReference>
<dbReference type="CDD" id="cd00496">
    <property type="entry name" value="PheRS_alpha_core"/>
    <property type="match status" value="1"/>
</dbReference>
<dbReference type="FunFam" id="3.30.930.10:FF:000178">
    <property type="entry name" value="Phenylalanyl-tRNA synthetase subunit alpha"/>
    <property type="match status" value="1"/>
</dbReference>
<dbReference type="Gene3D" id="1.10.10.2320">
    <property type="match status" value="1"/>
</dbReference>
<dbReference type="Gene3D" id="1.10.10.2330">
    <property type="match status" value="1"/>
</dbReference>
<dbReference type="Gene3D" id="3.30.1370.240">
    <property type="match status" value="1"/>
</dbReference>
<dbReference type="Gene3D" id="3.30.930.10">
    <property type="entry name" value="Bira Bifunctional Protein, Domain 2"/>
    <property type="match status" value="1"/>
</dbReference>
<dbReference type="InterPro" id="IPR006195">
    <property type="entry name" value="aa-tRNA-synth_II"/>
</dbReference>
<dbReference type="InterPro" id="IPR045864">
    <property type="entry name" value="aa-tRNA-synth_II/BPL/LPL"/>
</dbReference>
<dbReference type="InterPro" id="IPR004529">
    <property type="entry name" value="Phe-tRNA-synth_IIc_asu"/>
</dbReference>
<dbReference type="InterPro" id="IPR002319">
    <property type="entry name" value="Phenylalanyl-tRNA_Synthase"/>
</dbReference>
<dbReference type="InterPro" id="IPR040725">
    <property type="entry name" value="PheRS_DBD3"/>
</dbReference>
<dbReference type="NCBIfam" id="TIGR00468">
    <property type="entry name" value="pheS"/>
    <property type="match status" value="1"/>
</dbReference>
<dbReference type="NCBIfam" id="NF003210">
    <property type="entry name" value="PRK04172.1"/>
    <property type="match status" value="1"/>
</dbReference>
<dbReference type="PANTHER" id="PTHR11538:SF40">
    <property type="entry name" value="PHENYLALANINE--TRNA LIGASE ALPHA SUBUNIT"/>
    <property type="match status" value="1"/>
</dbReference>
<dbReference type="PANTHER" id="PTHR11538">
    <property type="entry name" value="PHENYLALANYL-TRNA SYNTHETASE"/>
    <property type="match status" value="1"/>
</dbReference>
<dbReference type="Pfam" id="PF18553">
    <property type="entry name" value="PheRS_DBD3"/>
    <property type="match status" value="1"/>
</dbReference>
<dbReference type="Pfam" id="PF01409">
    <property type="entry name" value="tRNA-synt_2d"/>
    <property type="match status" value="1"/>
</dbReference>
<dbReference type="SUPFAM" id="SSF55681">
    <property type="entry name" value="Class II aaRS and biotin synthetases"/>
    <property type="match status" value="1"/>
</dbReference>
<dbReference type="PROSITE" id="PS50862">
    <property type="entry name" value="AA_TRNA_LIGASE_II"/>
    <property type="match status" value="1"/>
</dbReference>